<organism>
    <name type="scientific">Streptomyces griseus subsp. griseus (strain JCM 4626 / CBS 651.72 / NBRC 13350 / KCC S-0626 / ISP 5235)</name>
    <dbReference type="NCBI Taxonomy" id="455632"/>
    <lineage>
        <taxon>Bacteria</taxon>
        <taxon>Bacillati</taxon>
        <taxon>Actinomycetota</taxon>
        <taxon>Actinomycetes</taxon>
        <taxon>Kitasatosporales</taxon>
        <taxon>Streptomycetaceae</taxon>
        <taxon>Streptomyces</taxon>
    </lineage>
</organism>
<feature type="chain" id="PRO_0000391230" description="NADH-quinone oxidoreductase subunit N 2">
    <location>
        <begin position="1"/>
        <end position="532"/>
    </location>
</feature>
<feature type="transmembrane region" description="Helical" evidence="1">
    <location>
        <begin position="37"/>
        <end position="57"/>
    </location>
</feature>
<feature type="transmembrane region" description="Helical" evidence="1">
    <location>
        <begin position="63"/>
        <end position="83"/>
    </location>
</feature>
<feature type="transmembrane region" description="Helical" evidence="1">
    <location>
        <begin position="107"/>
        <end position="127"/>
    </location>
</feature>
<feature type="transmembrane region" description="Helical" evidence="1">
    <location>
        <begin position="133"/>
        <end position="153"/>
    </location>
</feature>
<feature type="transmembrane region" description="Helical" evidence="1">
    <location>
        <begin position="158"/>
        <end position="178"/>
    </location>
</feature>
<feature type="transmembrane region" description="Helical" evidence="1">
    <location>
        <begin position="192"/>
        <end position="212"/>
    </location>
</feature>
<feature type="transmembrane region" description="Helical" evidence="1">
    <location>
        <begin position="241"/>
        <end position="261"/>
    </location>
</feature>
<feature type="transmembrane region" description="Helical" evidence="1">
    <location>
        <begin position="276"/>
        <end position="296"/>
    </location>
</feature>
<feature type="transmembrane region" description="Helical" evidence="1">
    <location>
        <begin position="302"/>
        <end position="322"/>
    </location>
</feature>
<feature type="transmembrane region" description="Helical" evidence="1">
    <location>
        <begin position="336"/>
        <end position="356"/>
    </location>
</feature>
<feature type="transmembrane region" description="Helical" evidence="1">
    <location>
        <begin position="367"/>
        <end position="387"/>
    </location>
</feature>
<feature type="transmembrane region" description="Helical" evidence="1">
    <location>
        <begin position="411"/>
        <end position="431"/>
    </location>
</feature>
<feature type="transmembrane region" description="Helical" evidence="1">
    <location>
        <begin position="444"/>
        <end position="464"/>
    </location>
</feature>
<feature type="transmembrane region" description="Helical" evidence="1">
    <location>
        <begin position="504"/>
        <end position="524"/>
    </location>
</feature>
<proteinExistence type="inferred from homology"/>
<protein>
    <recommendedName>
        <fullName evidence="1">NADH-quinone oxidoreductase subunit N 2</fullName>
        <ecNumber evidence="1">7.1.1.-</ecNumber>
    </recommendedName>
    <alternativeName>
        <fullName evidence="1">NADH dehydrogenase I subunit N 2</fullName>
    </alternativeName>
    <alternativeName>
        <fullName evidence="1">NDH-1 subunit N 2</fullName>
    </alternativeName>
</protein>
<comment type="function">
    <text evidence="1">NDH-1 shuttles electrons from NADH, via FMN and iron-sulfur (Fe-S) centers, to quinones in the respiratory chain. The immediate electron acceptor for the enzyme in this species is believed to be a menaquinone. Couples the redox reaction to proton translocation (for every two electrons transferred, four hydrogen ions are translocated across the cytoplasmic membrane), and thus conserves the redox energy in a proton gradient.</text>
</comment>
<comment type="catalytic activity">
    <reaction evidence="1">
        <text>a quinone + NADH + 5 H(+)(in) = a quinol + NAD(+) + 4 H(+)(out)</text>
        <dbReference type="Rhea" id="RHEA:57888"/>
        <dbReference type="ChEBI" id="CHEBI:15378"/>
        <dbReference type="ChEBI" id="CHEBI:24646"/>
        <dbReference type="ChEBI" id="CHEBI:57540"/>
        <dbReference type="ChEBI" id="CHEBI:57945"/>
        <dbReference type="ChEBI" id="CHEBI:132124"/>
    </reaction>
</comment>
<comment type="subunit">
    <text evidence="1">NDH-1 is composed of 14 different subunits. Subunits NuoA, H, J, K, L, M, N constitute the membrane sector of the complex.</text>
</comment>
<comment type="subcellular location">
    <subcellularLocation>
        <location evidence="1">Cell membrane</location>
        <topology evidence="1">Multi-pass membrane protein</topology>
    </subcellularLocation>
</comment>
<comment type="similarity">
    <text evidence="1">Belongs to the complex I subunit 2 family.</text>
</comment>
<accession>B1W4V1</accession>
<dbReference type="EC" id="7.1.1.-" evidence="1"/>
<dbReference type="EMBL" id="AP009493">
    <property type="protein sequence ID" value="BAG19745.1"/>
    <property type="molecule type" value="Genomic_DNA"/>
</dbReference>
<dbReference type="RefSeq" id="WP_012379510.1">
    <property type="nucleotide sequence ID" value="NC_010572.1"/>
</dbReference>
<dbReference type="SMR" id="B1W4V1"/>
<dbReference type="KEGG" id="sgr:SGR_2916"/>
<dbReference type="PATRIC" id="fig|455632.4.peg.2977"/>
<dbReference type="eggNOG" id="COG1007">
    <property type="taxonomic scope" value="Bacteria"/>
</dbReference>
<dbReference type="HOGENOM" id="CLU_007100_1_1_11"/>
<dbReference type="Proteomes" id="UP000001685">
    <property type="component" value="Chromosome"/>
</dbReference>
<dbReference type="GO" id="GO:0005886">
    <property type="term" value="C:plasma membrane"/>
    <property type="evidence" value="ECO:0007669"/>
    <property type="project" value="UniProtKB-SubCell"/>
</dbReference>
<dbReference type="GO" id="GO:0008137">
    <property type="term" value="F:NADH dehydrogenase (ubiquinone) activity"/>
    <property type="evidence" value="ECO:0007669"/>
    <property type="project" value="InterPro"/>
</dbReference>
<dbReference type="GO" id="GO:0050136">
    <property type="term" value="F:NADH:ubiquinone reductase (non-electrogenic) activity"/>
    <property type="evidence" value="ECO:0007669"/>
    <property type="project" value="UniProtKB-UniRule"/>
</dbReference>
<dbReference type="GO" id="GO:0048038">
    <property type="term" value="F:quinone binding"/>
    <property type="evidence" value="ECO:0007669"/>
    <property type="project" value="UniProtKB-KW"/>
</dbReference>
<dbReference type="GO" id="GO:0042773">
    <property type="term" value="P:ATP synthesis coupled electron transport"/>
    <property type="evidence" value="ECO:0007669"/>
    <property type="project" value="InterPro"/>
</dbReference>
<dbReference type="HAMAP" id="MF_00445">
    <property type="entry name" value="NDH1_NuoN_1"/>
    <property type="match status" value="1"/>
</dbReference>
<dbReference type="InterPro" id="IPR010096">
    <property type="entry name" value="NADH-Q_OxRdtase_suN/2"/>
</dbReference>
<dbReference type="InterPro" id="IPR001750">
    <property type="entry name" value="ND/Mrp_TM"/>
</dbReference>
<dbReference type="PANTHER" id="PTHR22773">
    <property type="entry name" value="NADH DEHYDROGENASE"/>
    <property type="match status" value="1"/>
</dbReference>
<dbReference type="Pfam" id="PF00361">
    <property type="entry name" value="Proton_antipo_M"/>
    <property type="match status" value="1"/>
</dbReference>
<sequence length="532" mass="54775">MTADLGTTADLSTAPATGGLLAADAPSVVQSIDWLAVAPPTLTALAALAVLVADLFLPAHRKRLLGYAALTALAAALALLIPLRAGDRATFCVTTGTRACSYTADHFTLVIQALVLGGALLTVLLSLDDTRKLPAGEYWFLLLASAAGAALLPASRDLATLVVALEVASLPAFALVGIKRGDRRSSEAALKFFLSSVVATAVMLLGVSFVYATTGTLHLTEIATRLDDVPPVLDTLARTGVALTLVGFAFKTAAAPFHFWVPDTYVGAPLPIAAYLSVVGKAVGFSGLILVTVVAFPSYADVWGPALAVLAALTMTAGNVAALRQNAARARSAVRLLAWSSVAQAGYLLVPIAAAAYSSDDQIGSTVAYALMYAVVNLGAFAVAAVVARTHPGNRLTDYRGLYATRPLAALALGFFLLCLAGLPPGIIGLFAKVTVFSAAVDAGLGWLAVVMAVNVVIALYYYLQWTAILFRAPEGAPETTGTATAPTASAPPRRFRAPTPLTTAIVLTATAGILLSGVPQTVLRFASVSLF</sequence>
<reference key="1">
    <citation type="journal article" date="2008" name="J. Bacteriol.">
        <title>Genome sequence of the streptomycin-producing microorganism Streptomyces griseus IFO 13350.</title>
        <authorList>
            <person name="Ohnishi Y."/>
            <person name="Ishikawa J."/>
            <person name="Hara H."/>
            <person name="Suzuki H."/>
            <person name="Ikenoya M."/>
            <person name="Ikeda H."/>
            <person name="Yamashita A."/>
            <person name="Hattori M."/>
            <person name="Horinouchi S."/>
        </authorList>
    </citation>
    <scope>NUCLEOTIDE SEQUENCE [LARGE SCALE GENOMIC DNA]</scope>
    <source>
        <strain>JCM 4626 / CBS 651.72 / NBRC 13350 / KCC S-0626 / ISP 5235</strain>
    </source>
</reference>
<evidence type="ECO:0000255" key="1">
    <source>
        <dbReference type="HAMAP-Rule" id="MF_00445"/>
    </source>
</evidence>
<gene>
    <name evidence="1" type="primary">nuoN2</name>
    <name type="ordered locus">SGR_2916</name>
</gene>
<name>NUON2_STRGG</name>
<keyword id="KW-1003">Cell membrane</keyword>
<keyword id="KW-0472">Membrane</keyword>
<keyword id="KW-0520">NAD</keyword>
<keyword id="KW-0874">Quinone</keyword>
<keyword id="KW-1278">Translocase</keyword>
<keyword id="KW-0812">Transmembrane</keyword>
<keyword id="KW-1133">Transmembrane helix</keyword>
<keyword id="KW-0813">Transport</keyword>